<protein>
    <recommendedName>
        <fullName evidence="1">Large ribosomal subunit protein uL10</fullName>
    </recommendedName>
    <alternativeName>
        <fullName evidence="2">50S ribosomal protein L10</fullName>
    </alternativeName>
</protein>
<proteinExistence type="inferred from homology"/>
<name>RL10_STAA9</name>
<sequence>MSAIIEAKKQLVDEIAEVLSNSVSTVIVDYRGLTVAEVTDLRSQLREAGVEYKVYKNTMVRRAAEKAGIEGLDEFLTGPTAIATSSEDAVAAAKVISGFAKDHEALEIKSGVMEGNVITAEEVKTVGSLPSHDGLVSMLLSVLQAPVRNFAYAVKAIGEQKEENAE</sequence>
<gene>
    <name evidence="1" type="primary">rplJ</name>
    <name type="ordered locus">SaurJH9_0562</name>
</gene>
<comment type="function">
    <text evidence="1">Forms part of the ribosomal stalk, playing a central role in the interaction of the ribosome with GTP-bound translation factors.</text>
</comment>
<comment type="subunit">
    <text evidence="1">Part of the ribosomal stalk of the 50S ribosomal subunit. The N-terminus interacts with L11 and the large rRNA to form the base of the stalk. The C-terminus forms an elongated spine to which L12 dimers bind in a sequential fashion forming a multimeric L10(L12)X complex.</text>
</comment>
<comment type="similarity">
    <text evidence="1">Belongs to the universal ribosomal protein uL10 family.</text>
</comment>
<evidence type="ECO:0000255" key="1">
    <source>
        <dbReference type="HAMAP-Rule" id="MF_00362"/>
    </source>
</evidence>
<evidence type="ECO:0000305" key="2"/>
<dbReference type="EMBL" id="CP000703">
    <property type="protein sequence ID" value="ABQ48366.1"/>
    <property type="molecule type" value="Genomic_DNA"/>
</dbReference>
<dbReference type="RefSeq" id="WP_001273085.1">
    <property type="nucleotide sequence ID" value="NC_009487.1"/>
</dbReference>
<dbReference type="SMR" id="A5IQ93"/>
<dbReference type="KEGG" id="saj:SaurJH9_0562"/>
<dbReference type="HOGENOM" id="CLU_092227_2_0_9"/>
<dbReference type="GO" id="GO:0015934">
    <property type="term" value="C:large ribosomal subunit"/>
    <property type="evidence" value="ECO:0007669"/>
    <property type="project" value="InterPro"/>
</dbReference>
<dbReference type="GO" id="GO:0070180">
    <property type="term" value="F:large ribosomal subunit rRNA binding"/>
    <property type="evidence" value="ECO:0007669"/>
    <property type="project" value="UniProtKB-UniRule"/>
</dbReference>
<dbReference type="GO" id="GO:0003735">
    <property type="term" value="F:structural constituent of ribosome"/>
    <property type="evidence" value="ECO:0007669"/>
    <property type="project" value="InterPro"/>
</dbReference>
<dbReference type="GO" id="GO:0006412">
    <property type="term" value="P:translation"/>
    <property type="evidence" value="ECO:0007669"/>
    <property type="project" value="UniProtKB-UniRule"/>
</dbReference>
<dbReference type="CDD" id="cd05797">
    <property type="entry name" value="Ribosomal_L10"/>
    <property type="match status" value="1"/>
</dbReference>
<dbReference type="FunFam" id="3.30.70.1730:FF:000001">
    <property type="entry name" value="50S ribosomal protein L10"/>
    <property type="match status" value="1"/>
</dbReference>
<dbReference type="Gene3D" id="3.30.70.1730">
    <property type="match status" value="1"/>
</dbReference>
<dbReference type="Gene3D" id="6.10.250.290">
    <property type="match status" value="1"/>
</dbReference>
<dbReference type="HAMAP" id="MF_00362">
    <property type="entry name" value="Ribosomal_uL10"/>
    <property type="match status" value="1"/>
</dbReference>
<dbReference type="InterPro" id="IPR001790">
    <property type="entry name" value="Ribosomal_uL10"/>
</dbReference>
<dbReference type="InterPro" id="IPR043141">
    <property type="entry name" value="Ribosomal_uL10-like_sf"/>
</dbReference>
<dbReference type="InterPro" id="IPR022973">
    <property type="entry name" value="Ribosomal_uL10_bac"/>
</dbReference>
<dbReference type="InterPro" id="IPR047865">
    <property type="entry name" value="Ribosomal_uL10_bac_type"/>
</dbReference>
<dbReference type="InterPro" id="IPR002363">
    <property type="entry name" value="Ribosomal_uL10_CS_bac"/>
</dbReference>
<dbReference type="NCBIfam" id="NF000955">
    <property type="entry name" value="PRK00099.1-1"/>
    <property type="match status" value="1"/>
</dbReference>
<dbReference type="PANTHER" id="PTHR11560">
    <property type="entry name" value="39S RIBOSOMAL PROTEIN L10, MITOCHONDRIAL"/>
    <property type="match status" value="1"/>
</dbReference>
<dbReference type="Pfam" id="PF00466">
    <property type="entry name" value="Ribosomal_L10"/>
    <property type="match status" value="1"/>
</dbReference>
<dbReference type="SUPFAM" id="SSF160369">
    <property type="entry name" value="Ribosomal protein L10-like"/>
    <property type="match status" value="1"/>
</dbReference>
<dbReference type="PROSITE" id="PS01109">
    <property type="entry name" value="RIBOSOMAL_L10"/>
    <property type="match status" value="1"/>
</dbReference>
<organism>
    <name type="scientific">Staphylococcus aureus (strain JH9)</name>
    <dbReference type="NCBI Taxonomy" id="359786"/>
    <lineage>
        <taxon>Bacteria</taxon>
        <taxon>Bacillati</taxon>
        <taxon>Bacillota</taxon>
        <taxon>Bacilli</taxon>
        <taxon>Bacillales</taxon>
        <taxon>Staphylococcaceae</taxon>
        <taxon>Staphylococcus</taxon>
    </lineage>
</organism>
<keyword id="KW-0687">Ribonucleoprotein</keyword>
<keyword id="KW-0689">Ribosomal protein</keyword>
<keyword id="KW-0694">RNA-binding</keyword>
<keyword id="KW-0699">rRNA-binding</keyword>
<feature type="chain" id="PRO_1000079566" description="Large ribosomal subunit protein uL10">
    <location>
        <begin position="1"/>
        <end position="166"/>
    </location>
</feature>
<accession>A5IQ93</accession>
<reference key="1">
    <citation type="submission" date="2007-05" db="EMBL/GenBank/DDBJ databases">
        <title>Complete sequence of chromosome of Staphylococcus aureus subsp. aureus JH9.</title>
        <authorList>
            <consortium name="US DOE Joint Genome Institute"/>
            <person name="Copeland A."/>
            <person name="Lucas S."/>
            <person name="Lapidus A."/>
            <person name="Barry K."/>
            <person name="Detter J.C."/>
            <person name="Glavina del Rio T."/>
            <person name="Hammon N."/>
            <person name="Israni S."/>
            <person name="Pitluck S."/>
            <person name="Chain P."/>
            <person name="Malfatti S."/>
            <person name="Shin M."/>
            <person name="Vergez L."/>
            <person name="Schmutz J."/>
            <person name="Larimer F."/>
            <person name="Land M."/>
            <person name="Hauser L."/>
            <person name="Kyrpides N."/>
            <person name="Kim E."/>
            <person name="Tomasz A."/>
            <person name="Richardson P."/>
        </authorList>
    </citation>
    <scope>NUCLEOTIDE SEQUENCE [LARGE SCALE GENOMIC DNA]</scope>
    <source>
        <strain>JH9</strain>
    </source>
</reference>